<keyword id="KW-0131">Cell cycle</keyword>
<keyword id="KW-0132">Cell division</keyword>
<keyword id="KW-0133">Cell shape</keyword>
<keyword id="KW-0175">Coiled coil</keyword>
<keyword id="KW-0963">Cytoplasm</keyword>
<gene>
    <name evidence="1" type="primary">gpsB</name>
    <name type="ordered locus">BcerKBAB4_1483</name>
</gene>
<proteinExistence type="inferred from homology"/>
<feature type="chain" id="PRO_1000189494" description="Cell cycle protein GpsB">
    <location>
        <begin position="1"/>
        <end position="111"/>
    </location>
</feature>
<feature type="coiled-coil region" evidence="1">
    <location>
        <begin position="38"/>
        <end position="72"/>
    </location>
</feature>
<protein>
    <recommendedName>
        <fullName evidence="1">Cell cycle protein GpsB</fullName>
    </recommendedName>
    <alternativeName>
        <fullName evidence="1">Guiding PBP1-shuttling protein</fullName>
    </alternativeName>
</protein>
<dbReference type="EMBL" id="CP000903">
    <property type="protein sequence ID" value="ABY42730.1"/>
    <property type="molecule type" value="Genomic_DNA"/>
</dbReference>
<dbReference type="RefSeq" id="WP_000622426.1">
    <property type="nucleotide sequence ID" value="NC_010184.1"/>
</dbReference>
<dbReference type="SMR" id="A9VMG8"/>
<dbReference type="GeneID" id="87594937"/>
<dbReference type="KEGG" id="bwe:BcerKBAB4_1483"/>
<dbReference type="eggNOG" id="COG3599">
    <property type="taxonomic scope" value="Bacteria"/>
</dbReference>
<dbReference type="HOGENOM" id="CLU_140309_1_0_9"/>
<dbReference type="Proteomes" id="UP000002154">
    <property type="component" value="Chromosome"/>
</dbReference>
<dbReference type="GO" id="GO:0005737">
    <property type="term" value="C:cytoplasm"/>
    <property type="evidence" value="ECO:0007669"/>
    <property type="project" value="UniProtKB-SubCell"/>
</dbReference>
<dbReference type="GO" id="GO:0051301">
    <property type="term" value="P:cell division"/>
    <property type="evidence" value="ECO:0007669"/>
    <property type="project" value="UniProtKB-UniRule"/>
</dbReference>
<dbReference type="GO" id="GO:0008360">
    <property type="term" value="P:regulation of cell shape"/>
    <property type="evidence" value="ECO:0007669"/>
    <property type="project" value="UniProtKB-UniRule"/>
</dbReference>
<dbReference type="Gene3D" id="6.10.250.660">
    <property type="match status" value="1"/>
</dbReference>
<dbReference type="HAMAP" id="MF_02011">
    <property type="entry name" value="GpsB"/>
    <property type="match status" value="1"/>
</dbReference>
<dbReference type="InterPro" id="IPR011229">
    <property type="entry name" value="Cell_cycle_GpsB"/>
</dbReference>
<dbReference type="InterPro" id="IPR019933">
    <property type="entry name" value="DivIVA_domain"/>
</dbReference>
<dbReference type="InterPro" id="IPR007793">
    <property type="entry name" value="DivIVA_fam"/>
</dbReference>
<dbReference type="NCBIfam" id="TIGR03544">
    <property type="entry name" value="DivI1A_domain"/>
    <property type="match status" value="1"/>
</dbReference>
<dbReference type="NCBIfam" id="NF010725">
    <property type="entry name" value="PRK14127.1"/>
    <property type="match status" value="1"/>
</dbReference>
<dbReference type="PANTHER" id="PTHR35794:SF1">
    <property type="entry name" value="CELL CYCLE PROTEIN GPSB"/>
    <property type="match status" value="1"/>
</dbReference>
<dbReference type="PANTHER" id="PTHR35794">
    <property type="entry name" value="CELL DIVISION PROTEIN DIVIVA"/>
    <property type="match status" value="1"/>
</dbReference>
<dbReference type="Pfam" id="PF05103">
    <property type="entry name" value="DivIVA"/>
    <property type="match status" value="1"/>
</dbReference>
<dbReference type="PIRSF" id="PIRSF029938">
    <property type="entry name" value="UCP029938"/>
    <property type="match status" value="1"/>
</dbReference>
<comment type="function">
    <text evidence="1">Divisome component that associates with the complex late in its assembly, after the Z-ring is formed, and is dependent on DivIC and PBP2B for its recruitment to the divisome. Together with EzrA, is a key component of the system that regulates PBP1 localization during cell cycle progression. Its main role could be the removal of PBP1 from the cell pole after pole maturation is completed. Also contributes to the recruitment of PBP1 to the division complex. Not essential for septum formation.</text>
</comment>
<comment type="subunit">
    <text evidence="1">Forms polymers through the coiled coil domains. Interacts with PBP1, MreC and EzrA.</text>
</comment>
<comment type="subcellular location">
    <subcellularLocation>
        <location evidence="1">Cytoplasm</location>
    </subcellularLocation>
    <text evidence="1">Shuttles between the lateral wall and the division site in a cell cycle-dependent manner.</text>
</comment>
<comment type="similarity">
    <text evidence="1">Belongs to the GpsB family.</text>
</comment>
<accession>A9VMG8</accession>
<organism>
    <name type="scientific">Bacillus mycoides (strain KBAB4)</name>
    <name type="common">Bacillus weihenstephanensis</name>
    <dbReference type="NCBI Taxonomy" id="315730"/>
    <lineage>
        <taxon>Bacteria</taxon>
        <taxon>Bacillati</taxon>
        <taxon>Bacillota</taxon>
        <taxon>Bacilli</taxon>
        <taxon>Bacillales</taxon>
        <taxon>Bacillaceae</taxon>
        <taxon>Bacillus</taxon>
        <taxon>Bacillus cereus group</taxon>
    </lineage>
</organism>
<evidence type="ECO:0000255" key="1">
    <source>
        <dbReference type="HAMAP-Rule" id="MF_02011"/>
    </source>
</evidence>
<name>GPSB_BACMK</name>
<sequence length="111" mass="12992">MISDKIKLTAKDILEKEFKTGMRGYQQEEVDKFLDMIIKDYEAFHKEFDQLKQQNARLKRELEEQKVAATQVPQQPVQTPVAQPVYNNTNTDILKRLSNLEKAVFGSKLYE</sequence>
<reference key="1">
    <citation type="journal article" date="2008" name="Chem. Biol. Interact.">
        <title>Extending the Bacillus cereus group genomics to putative food-borne pathogens of different toxicity.</title>
        <authorList>
            <person name="Lapidus A."/>
            <person name="Goltsman E."/>
            <person name="Auger S."/>
            <person name="Galleron N."/>
            <person name="Segurens B."/>
            <person name="Dossat C."/>
            <person name="Land M.L."/>
            <person name="Broussolle V."/>
            <person name="Brillard J."/>
            <person name="Guinebretiere M.-H."/>
            <person name="Sanchis V."/>
            <person name="Nguen-the C."/>
            <person name="Lereclus D."/>
            <person name="Richardson P."/>
            <person name="Wincker P."/>
            <person name="Weissenbach J."/>
            <person name="Ehrlich S.D."/>
            <person name="Sorokin A."/>
        </authorList>
    </citation>
    <scope>NUCLEOTIDE SEQUENCE [LARGE SCALE GENOMIC DNA]</scope>
    <source>
        <strain>KBAB4</strain>
    </source>
</reference>